<dbReference type="EMBL" id="CH476628">
    <property type="protein sequence ID" value="EDO04167.1"/>
    <property type="molecule type" value="Genomic_DNA"/>
</dbReference>
<dbReference type="RefSeq" id="XP_001592409.1">
    <property type="nucleotide sequence ID" value="XM_001592359.1"/>
</dbReference>
<dbReference type="FunCoup" id="A7EMV1">
    <property type="interactions" value="40"/>
</dbReference>
<dbReference type="STRING" id="665079.A7EMV1"/>
<dbReference type="GlyCosmos" id="A7EMV1">
    <property type="glycosylation" value="1 site, No reported glycans"/>
</dbReference>
<dbReference type="GeneID" id="5488259"/>
<dbReference type="KEGG" id="ssl:SS1G_06650"/>
<dbReference type="VEuPathDB" id="FungiDB:sscle_13g094260"/>
<dbReference type="InParanoid" id="A7EMV1"/>
<dbReference type="OMA" id="IYAQWLG"/>
<dbReference type="OrthoDB" id="5591789at2759"/>
<dbReference type="Proteomes" id="UP000001312">
    <property type="component" value="Unassembled WGS sequence"/>
</dbReference>
<dbReference type="GO" id="GO:0000139">
    <property type="term" value="C:Golgi membrane"/>
    <property type="evidence" value="ECO:0000318"/>
    <property type="project" value="GO_Central"/>
</dbReference>
<dbReference type="GO" id="GO:0016192">
    <property type="term" value="P:vesicle-mediated transport"/>
    <property type="evidence" value="ECO:0000318"/>
    <property type="project" value="GO_Central"/>
</dbReference>
<dbReference type="InterPro" id="IPR019365">
    <property type="entry name" value="TVP18/Ca-channel_flower"/>
</dbReference>
<dbReference type="PANTHER" id="PTHR13314">
    <property type="entry name" value="CALCIUM CHANNEL FLOWER HOMOLOG"/>
    <property type="match status" value="1"/>
</dbReference>
<dbReference type="PANTHER" id="PTHR13314:SF2">
    <property type="entry name" value="CALCIUM CHANNEL FLOWER HOMOLOG"/>
    <property type="match status" value="1"/>
</dbReference>
<dbReference type="Pfam" id="PF10233">
    <property type="entry name" value="Cg6151-P"/>
    <property type="match status" value="1"/>
</dbReference>
<dbReference type="SMART" id="SM01077">
    <property type="entry name" value="Cg6151-P"/>
    <property type="match status" value="1"/>
</dbReference>
<feature type="chain" id="PRO_0000343031" description="Golgi apparatus membrane protein tvp18">
    <location>
        <begin position="1"/>
        <end position="148"/>
    </location>
</feature>
<feature type="transmembrane region" description="Helical" evidence="2">
    <location>
        <begin position="12"/>
        <end position="32"/>
    </location>
</feature>
<feature type="transmembrane region" description="Helical" evidence="2">
    <location>
        <begin position="38"/>
        <end position="58"/>
    </location>
</feature>
<feature type="transmembrane region" description="Helical" evidence="2">
    <location>
        <begin position="82"/>
        <end position="104"/>
    </location>
</feature>
<feature type="transmembrane region" description="Helical" evidence="2">
    <location>
        <begin position="108"/>
        <end position="127"/>
    </location>
</feature>
<feature type="glycosylation site" description="N-linked (GlcNAc...) asparagine" evidence="2">
    <location>
        <position position="11"/>
    </location>
</feature>
<reference key="1">
    <citation type="journal article" date="2011" name="PLoS Genet.">
        <title>Genomic analysis of the necrotrophic fungal pathogens Sclerotinia sclerotiorum and Botrytis cinerea.</title>
        <authorList>
            <person name="Amselem J."/>
            <person name="Cuomo C.A."/>
            <person name="van Kan J.A.L."/>
            <person name="Viaud M."/>
            <person name="Benito E.P."/>
            <person name="Couloux A."/>
            <person name="Coutinho P.M."/>
            <person name="de Vries R.P."/>
            <person name="Dyer P.S."/>
            <person name="Fillinger S."/>
            <person name="Fournier E."/>
            <person name="Gout L."/>
            <person name="Hahn M."/>
            <person name="Kohn L."/>
            <person name="Lapalu N."/>
            <person name="Plummer K.M."/>
            <person name="Pradier J.-M."/>
            <person name="Quevillon E."/>
            <person name="Sharon A."/>
            <person name="Simon A."/>
            <person name="ten Have A."/>
            <person name="Tudzynski B."/>
            <person name="Tudzynski P."/>
            <person name="Wincker P."/>
            <person name="Andrew M."/>
            <person name="Anthouard V."/>
            <person name="Beever R.E."/>
            <person name="Beffa R."/>
            <person name="Benoit I."/>
            <person name="Bouzid O."/>
            <person name="Brault B."/>
            <person name="Chen Z."/>
            <person name="Choquer M."/>
            <person name="Collemare J."/>
            <person name="Cotton P."/>
            <person name="Danchin E.G."/>
            <person name="Da Silva C."/>
            <person name="Gautier A."/>
            <person name="Giraud C."/>
            <person name="Giraud T."/>
            <person name="Gonzalez C."/>
            <person name="Grossetete S."/>
            <person name="Gueldener U."/>
            <person name="Henrissat B."/>
            <person name="Howlett B.J."/>
            <person name="Kodira C."/>
            <person name="Kretschmer M."/>
            <person name="Lappartient A."/>
            <person name="Leroch M."/>
            <person name="Levis C."/>
            <person name="Mauceli E."/>
            <person name="Neuveglise C."/>
            <person name="Oeser B."/>
            <person name="Pearson M."/>
            <person name="Poulain J."/>
            <person name="Poussereau N."/>
            <person name="Quesneville H."/>
            <person name="Rascle C."/>
            <person name="Schumacher J."/>
            <person name="Segurens B."/>
            <person name="Sexton A."/>
            <person name="Silva E."/>
            <person name="Sirven C."/>
            <person name="Soanes D.M."/>
            <person name="Talbot N.J."/>
            <person name="Templeton M."/>
            <person name="Yandava C."/>
            <person name="Yarden O."/>
            <person name="Zeng Q."/>
            <person name="Rollins J.A."/>
            <person name="Lebrun M.-H."/>
            <person name="Dickman M."/>
        </authorList>
    </citation>
    <scope>NUCLEOTIDE SEQUENCE [LARGE SCALE GENOMIC DNA]</scope>
    <source>
        <strain>ATCC 18683 / 1980 / Ss-1</strain>
    </source>
</reference>
<evidence type="ECO:0000250" key="1"/>
<evidence type="ECO:0000255" key="2"/>
<evidence type="ECO:0000305" key="3"/>
<gene>
    <name type="primary">tvp18</name>
    <name type="ORF">SS1G_06650</name>
</gene>
<comment type="function">
    <text evidence="1">Golgi membrane protein involved in vesicular trafficking.</text>
</comment>
<comment type="subcellular location">
    <subcellularLocation>
        <location evidence="1">Golgi apparatus membrane</location>
        <topology evidence="1">Multi-pass membrane protein</topology>
    </subcellularLocation>
</comment>
<comment type="similarity">
    <text evidence="3">Belongs to the TVP18 family.</text>
</comment>
<organism>
    <name type="scientific">Sclerotinia sclerotiorum (strain ATCC 18683 / 1980 / Ss-1)</name>
    <name type="common">White mold</name>
    <name type="synonym">Whetzelinia sclerotiorum</name>
    <dbReference type="NCBI Taxonomy" id="665079"/>
    <lineage>
        <taxon>Eukaryota</taxon>
        <taxon>Fungi</taxon>
        <taxon>Dikarya</taxon>
        <taxon>Ascomycota</taxon>
        <taxon>Pezizomycotina</taxon>
        <taxon>Leotiomycetes</taxon>
        <taxon>Helotiales</taxon>
        <taxon>Sclerotiniaceae</taxon>
        <taxon>Sclerotinia</taxon>
    </lineage>
</organism>
<name>TVP18_SCLS1</name>
<proteinExistence type="inferred from homology"/>
<accession>A7EMV1</accession>
<sequence>MTIAEEFATRNFSIYGQWTGVVCILLCFALGIANLFHVSLLIIFSALCLVSSFLIIFIEIPLLLRICPTSSTFDTFMRRFTTNYMRAAIYMGMAIVQWLSIIIAASSLIAAAVLLTIAAGFYALAGLKGQGFVGSKTLGGQGVAQMIL</sequence>
<protein>
    <recommendedName>
        <fullName>Golgi apparatus membrane protein tvp18</fullName>
    </recommendedName>
</protein>
<keyword id="KW-0325">Glycoprotein</keyword>
<keyword id="KW-0333">Golgi apparatus</keyword>
<keyword id="KW-0472">Membrane</keyword>
<keyword id="KW-1185">Reference proteome</keyword>
<keyword id="KW-0812">Transmembrane</keyword>
<keyword id="KW-1133">Transmembrane helix</keyword>